<reference key="1">
    <citation type="journal article" date="2001" name="Nature">
        <title>Complete genome sequence of Salmonella enterica serovar Typhimurium LT2.</title>
        <authorList>
            <person name="McClelland M."/>
            <person name="Sanderson K.E."/>
            <person name="Spieth J."/>
            <person name="Clifton S.W."/>
            <person name="Latreille P."/>
            <person name="Courtney L."/>
            <person name="Porwollik S."/>
            <person name="Ali J."/>
            <person name="Dante M."/>
            <person name="Du F."/>
            <person name="Hou S."/>
            <person name="Layman D."/>
            <person name="Leonard S."/>
            <person name="Nguyen C."/>
            <person name="Scott K."/>
            <person name="Holmes A."/>
            <person name="Grewal N."/>
            <person name="Mulvaney E."/>
            <person name="Ryan E."/>
            <person name="Sun H."/>
            <person name="Florea L."/>
            <person name="Miller W."/>
            <person name="Stoneking T."/>
            <person name="Nhan M."/>
            <person name="Waterston R."/>
            <person name="Wilson R.K."/>
        </authorList>
    </citation>
    <scope>NUCLEOTIDE SEQUENCE [LARGE SCALE GENOMIC DNA]</scope>
    <source>
        <strain>LT2 / SGSC1412 / ATCC 700720</strain>
    </source>
</reference>
<reference key="2">
    <citation type="journal article" date="2007" name="Infect. Immun.">
        <title>SseL is a salmonella-specific translocated effector integrated into the SsrB-controlled salmonella pathogenicity island 2 type III secretion system.</title>
        <authorList>
            <person name="Coombes B.K."/>
            <person name="Lowden M.J."/>
            <person name="Bishop J.L."/>
            <person name="Wickham M.E."/>
            <person name="Brown N.F."/>
            <person name="Duong N."/>
            <person name="Osborne S."/>
            <person name="Gal-Mor O."/>
            <person name="Finlay B.B."/>
        </authorList>
    </citation>
    <scope>ROLE IN VIRULENCE</scope>
    <scope>SUBCELLULAR LOCATION</scope>
    <scope>INDUCTION</scope>
    <source>
        <strain>SL1344</strain>
    </source>
</reference>
<reference key="3">
    <citation type="journal article" date="2007" name="Proc. Natl. Acad. Sci. U.S.A.">
        <title>SseL, a Salmonella deubiquitinase required for macrophage killing and virulence.</title>
        <authorList>
            <person name="Rytkoenen A."/>
            <person name="Poh J."/>
            <person name="Garmendia J."/>
            <person name="Boyle C."/>
            <person name="Thompson A."/>
            <person name="Liu M."/>
            <person name="Freemont P."/>
            <person name="Hinton J.C.D."/>
            <person name="Holden D.W."/>
        </authorList>
    </citation>
    <scope>FUNCTION AS A DEUBIQUITINASE</scope>
    <scope>BIOPHYSICOCHEMICAL PROPERTIES</scope>
    <scope>SUBCELLULAR LOCATION</scope>
    <scope>INDUCTION</scope>
    <scope>MUTAGENESIS OF CYS-285</scope>
    <source>
        <strain>ATCC 14028 / SGSG 2980 / CDC 6516-60 / NCTC 12023</strain>
    </source>
</reference>
<reference key="4">
    <citation type="journal article" date="2010" name="Infect. Immun.">
        <title>Systematic analysis of the SsrAB virulon of Salmonella enterica.</title>
        <authorList>
            <person name="Xu X."/>
            <person name="Hensel M."/>
        </authorList>
    </citation>
    <scope>INDUCTION</scope>
    <source>
        <strain evidence="5">ATCC 14028 / SGSC 2980 / CDC 6516-60 / NCTC 12023</strain>
    </source>
</reference>
<proteinExistence type="evidence at protein level"/>
<dbReference type="EC" id="3.4.22.-"/>
<dbReference type="EMBL" id="AE006468">
    <property type="protein sequence ID" value="AAL21188.1"/>
    <property type="status" value="ALT_INIT"/>
    <property type="molecule type" value="Genomic_DNA"/>
</dbReference>
<dbReference type="RefSeq" id="NP_461229.3">
    <property type="nucleotide sequence ID" value="NC_003197.2"/>
</dbReference>
<dbReference type="RefSeq" id="WP_014343870.1">
    <property type="nucleotide sequence ID" value="NC_003197.2"/>
</dbReference>
<dbReference type="PDB" id="5HAF">
    <property type="method" value="X-ray"/>
    <property type="resolution" value="2.70 A"/>
    <property type="chains" value="A/B=24-340"/>
</dbReference>
<dbReference type="PDB" id="5UBW">
    <property type="method" value="X-ray"/>
    <property type="resolution" value="2.39 A"/>
    <property type="chains" value="A/B=158-340"/>
</dbReference>
<dbReference type="PDBsum" id="5HAF"/>
<dbReference type="PDBsum" id="5UBW"/>
<dbReference type="SMR" id="Q8ZNG2"/>
<dbReference type="DIP" id="DIP-60877N"/>
<dbReference type="IntAct" id="Q8ZNG2">
    <property type="interactions" value="1"/>
</dbReference>
<dbReference type="STRING" id="99287.STM2287"/>
<dbReference type="PaxDb" id="99287-STM2287"/>
<dbReference type="GeneID" id="1253809"/>
<dbReference type="KEGG" id="stm:STM2287"/>
<dbReference type="PATRIC" id="fig|99287.12.peg.2421"/>
<dbReference type="HOGENOM" id="CLU_069513_0_0_6"/>
<dbReference type="PhylomeDB" id="Q8ZNG2"/>
<dbReference type="PHI-base" id="PHI:10190"/>
<dbReference type="PHI-base" id="PHI:2623"/>
<dbReference type="Proteomes" id="UP000001014">
    <property type="component" value="Chromosome"/>
</dbReference>
<dbReference type="GO" id="GO:0005576">
    <property type="term" value="C:extracellular region"/>
    <property type="evidence" value="ECO:0007669"/>
    <property type="project" value="UniProtKB-SubCell"/>
</dbReference>
<dbReference type="GO" id="GO:0030430">
    <property type="term" value="C:host cell cytoplasm"/>
    <property type="evidence" value="ECO:0007669"/>
    <property type="project" value="UniProtKB-SubCell"/>
</dbReference>
<dbReference type="GO" id="GO:0008234">
    <property type="term" value="F:cysteine-type peptidase activity"/>
    <property type="evidence" value="ECO:0007669"/>
    <property type="project" value="UniProtKB-KW"/>
</dbReference>
<dbReference type="GO" id="GO:0006508">
    <property type="term" value="P:proteolysis"/>
    <property type="evidence" value="ECO:0007669"/>
    <property type="project" value="UniProtKB-KW"/>
</dbReference>
<dbReference type="InterPro" id="IPR054329">
    <property type="entry name" value="ElaD/SseL-like_N"/>
</dbReference>
<dbReference type="InterPro" id="IPR054328">
    <property type="entry name" value="SseL-like_C"/>
</dbReference>
<dbReference type="NCBIfam" id="NF008812">
    <property type="entry name" value="PRK11836.1"/>
    <property type="match status" value="1"/>
</dbReference>
<dbReference type="NCBIfam" id="NF011421">
    <property type="entry name" value="PRK14848.1"/>
    <property type="match status" value="1"/>
</dbReference>
<dbReference type="Pfam" id="PF22102">
    <property type="entry name" value="ElaD-SseL-like_C"/>
    <property type="match status" value="1"/>
</dbReference>
<dbReference type="Pfam" id="PF22103">
    <property type="entry name" value="ElaD_SseL-like_N"/>
    <property type="match status" value="1"/>
</dbReference>
<keyword id="KW-0002">3D-structure</keyword>
<keyword id="KW-1035">Host cytoplasm</keyword>
<keyword id="KW-0378">Hydrolase</keyword>
<keyword id="KW-0645">Protease</keyword>
<keyword id="KW-1185">Reference proteome</keyword>
<keyword id="KW-0964">Secreted</keyword>
<keyword id="KW-0788">Thiol protease</keyword>
<keyword id="KW-0843">Virulence</keyword>
<protein>
    <recommendedName>
        <fullName>Deubiquitinase SseL</fullName>
        <ecNumber>3.4.22.-</ecNumber>
    </recommendedName>
    <alternativeName>
        <fullName>Deubiquitinating enzyme</fullName>
        <shortName>DUB</shortName>
    </alternativeName>
    <alternativeName>
        <fullName>Deubiquitinating protease</fullName>
    </alternativeName>
    <alternativeName>
        <fullName>Salmonella secreted effector L</fullName>
    </alternativeName>
</protein>
<organism>
    <name type="scientific">Salmonella typhimurium (strain LT2 / SGSC1412 / ATCC 700720)</name>
    <dbReference type="NCBI Taxonomy" id="99287"/>
    <lineage>
        <taxon>Bacteria</taxon>
        <taxon>Pseudomonadati</taxon>
        <taxon>Pseudomonadota</taxon>
        <taxon>Gammaproteobacteria</taxon>
        <taxon>Enterobacterales</taxon>
        <taxon>Enterobacteriaceae</taxon>
        <taxon>Salmonella</taxon>
    </lineage>
</organism>
<evidence type="ECO:0000250" key="1"/>
<evidence type="ECO:0000269" key="2">
    <source>
    </source>
</evidence>
<evidence type="ECO:0000269" key="3">
    <source>
    </source>
</evidence>
<evidence type="ECO:0000269" key="4">
    <source>
    </source>
</evidence>
<evidence type="ECO:0000303" key="5">
    <source>
    </source>
</evidence>
<evidence type="ECO:0000305" key="6"/>
<evidence type="ECO:0007829" key="7">
    <source>
        <dbReference type="PDB" id="5HAF"/>
    </source>
</evidence>
<evidence type="ECO:0007829" key="8">
    <source>
        <dbReference type="PDB" id="5UBW"/>
    </source>
</evidence>
<name>SSEL_SALTY</name>
<sequence length="340" mass="38221">MNICVNSLYRLSIPQFHSLYTEEVSDEALTLLFSAVENGDQNCIDLLCNLALRNDDLGHRVEKFLFDLFSGKRTGSSDIDKKINQACLVLHQIANNDITKDNTEWKKLHAPSRLLYMAGSATTDLSKKIGIAHKIMGDQFAQTDQEQVGVENLWCGARMLSSDELAAATQGLVQESPLLSVNYPIGLIHPTTKENILSTQLLEKIAQSGLSHNEVFLVNTGDHWLLCLFYKLAEKIKCLIFNTYYDLNENTKQEIIEAAKIAGISESDEVNFIEMNLQNNVPNGCGLFCYHTIQLLSNAGQNDPATTLREFAENFLTLSVEEQALFNTQTRRQIYEYSLQ</sequence>
<gene>
    <name type="primary">sseL</name>
    <name type="ordered locus">STM2287</name>
</gene>
<accession>Q8ZNG2</accession>
<feature type="chain" id="PRO_0000323575" description="Deubiquitinase SseL">
    <location>
        <begin position="1"/>
        <end position="340"/>
    </location>
</feature>
<feature type="active site" evidence="1">
    <location>
        <position position="223"/>
    </location>
</feature>
<feature type="active site" description="Nucleophile" evidence="6">
    <location>
        <position position="285"/>
    </location>
</feature>
<feature type="mutagenesis site" description="Abolishes deubiquitinating activity." evidence="3">
    <original>C</original>
    <variation>A</variation>
    <location>
        <position position="285"/>
    </location>
</feature>
<feature type="helix" evidence="7">
    <location>
        <begin position="26"/>
        <end position="38"/>
    </location>
</feature>
<feature type="helix" evidence="7">
    <location>
        <begin position="41"/>
        <end position="51"/>
    </location>
</feature>
<feature type="helix" evidence="7">
    <location>
        <begin position="56"/>
        <end position="69"/>
    </location>
</feature>
<feature type="helix" evidence="7">
    <location>
        <begin position="77"/>
        <end position="94"/>
    </location>
</feature>
<feature type="helix" evidence="7">
    <location>
        <begin position="97"/>
        <end position="101"/>
    </location>
</feature>
<feature type="helix" evidence="7">
    <location>
        <begin position="106"/>
        <end position="108"/>
    </location>
</feature>
<feature type="helix" evidence="7">
    <location>
        <begin position="113"/>
        <end position="118"/>
    </location>
</feature>
<feature type="helix" evidence="7">
    <location>
        <begin position="125"/>
        <end position="127"/>
    </location>
</feature>
<feature type="helix" evidence="7">
    <location>
        <begin position="129"/>
        <end position="135"/>
    </location>
</feature>
<feature type="helix" evidence="8">
    <location>
        <begin position="162"/>
        <end position="169"/>
    </location>
</feature>
<feature type="turn" evidence="7">
    <location>
        <begin position="172"/>
        <end position="175"/>
    </location>
</feature>
<feature type="strand" evidence="7">
    <location>
        <begin position="179"/>
        <end position="181"/>
    </location>
</feature>
<feature type="strand" evidence="8">
    <location>
        <begin position="185"/>
        <end position="188"/>
    </location>
</feature>
<feature type="turn" evidence="8">
    <location>
        <begin position="190"/>
        <end position="192"/>
    </location>
</feature>
<feature type="helix" evidence="8">
    <location>
        <begin position="196"/>
        <end position="205"/>
    </location>
</feature>
<feature type="strand" evidence="8">
    <location>
        <begin position="212"/>
        <end position="219"/>
    </location>
</feature>
<feature type="strand" evidence="8">
    <location>
        <begin position="224"/>
        <end position="242"/>
    </location>
</feature>
<feature type="helix" evidence="8">
    <location>
        <begin position="249"/>
        <end position="262"/>
    </location>
</feature>
<feature type="helix" evidence="7">
    <location>
        <begin position="267"/>
        <end position="269"/>
    </location>
</feature>
<feature type="strand" evidence="8">
    <location>
        <begin position="271"/>
        <end position="274"/>
    </location>
</feature>
<feature type="strand" evidence="8">
    <location>
        <begin position="279"/>
        <end position="281"/>
    </location>
</feature>
<feature type="turn" evidence="8">
    <location>
        <begin position="282"/>
        <end position="284"/>
    </location>
</feature>
<feature type="helix" evidence="8">
    <location>
        <begin position="285"/>
        <end position="299"/>
    </location>
</feature>
<feature type="helix" evidence="8">
    <location>
        <begin position="304"/>
        <end position="316"/>
    </location>
</feature>
<feature type="helix" evidence="8">
    <location>
        <begin position="320"/>
        <end position="337"/>
    </location>
</feature>
<comment type="function">
    <text evidence="2 3">Effector proteins function to alter host cell physiology and promote bacterial survival in host tissues. This protease targets the host cell ubiquitin pathway by acting as a deubiquitinase in infected host cells. Specifically hydrolyzes mono- and polyubiquitin substrates in vitro with a preference for 'Lys-63'-linked ubiquitin chains, suggesting that it interferes with a signaling pathway rather than inhibiting proteasomal-dependent degradation of its targets. Does not possess desumoylating activity. Is required for the Salmonella-induced delayed cytotoxicity in macrophages and full virulence. Is not required for intracellular bacterial replication.</text>
</comment>
<comment type="biophysicochemical properties">
    <kinetics>
        <KM evidence="3">1.5 uM for ubiquitin-1-amido methyl coumarin (Ub-AMC)</KM>
        <text>The Vmax of the reaction with ubiquitin-1-amido methyl coumarin (Ub-AMC) as substrate is 2354 pM/sec/uM enzyme.</text>
    </kinetics>
</comment>
<comment type="interaction">
    <interactant intactId="EBI-10690213">
        <id>Q8ZNG2</id>
    </interactant>
    <interactant intactId="EBI-2681902">
        <id>P22059</id>
        <label>OSBP</label>
    </interactant>
    <organismsDiffer>true</organismsDiffer>
    <experiments>4</experiments>
</comment>
<comment type="subcellular location">
    <subcellularLocation>
        <location>Secreted</location>
    </subcellularLocation>
    <subcellularLocation>
        <location>Host cytoplasm</location>
    </subcellularLocation>
    <text>Secreted via type III secretion system 2 (SPI-2 T3SS), and delivered into the host cytoplasm. In phagocytic cells localizes to the Salmonella-containing vacuole (SCV). In epithelial cells localizes to the Salmonella-containing vacuole (SCV) and to the Salmonella-induced filaments (Sifs), which are tubular membrane extensions from the SCV that are formed at late stages of infection.</text>
</comment>
<comment type="induction">
    <text evidence="2 3 4">Expression of the gene is induced inside phagocytic cells and is dependent on the SsrA/SsrB system (PubMed:17158898, PubMed:17360673). Highly expressed in host macrophages and when grown in an acidic environment (PubMed:19858298).</text>
</comment>
<comment type="similarity">
    <text evidence="6">Belongs to the peptidase C79 family.</text>
</comment>
<comment type="sequence caution" evidence="6">
    <conflict type="erroneous initiation">
        <sequence resource="EMBL-CDS" id="AAL21188"/>
    </conflict>
</comment>